<comment type="function">
    <text evidence="1">Specifically dimethylates two adjacent adenosines (A1518 and A1519) in the loop of a conserved hairpin near the 3'-end of 16S rRNA in the 30S particle. May play a critical role in biogenesis of 30S subunits.</text>
</comment>
<comment type="catalytic activity">
    <reaction evidence="1">
        <text>adenosine(1518)/adenosine(1519) in 16S rRNA + 4 S-adenosyl-L-methionine = N(6)-dimethyladenosine(1518)/N(6)-dimethyladenosine(1519) in 16S rRNA + 4 S-adenosyl-L-homocysteine + 4 H(+)</text>
        <dbReference type="Rhea" id="RHEA:19609"/>
        <dbReference type="Rhea" id="RHEA-COMP:10232"/>
        <dbReference type="Rhea" id="RHEA-COMP:10233"/>
        <dbReference type="ChEBI" id="CHEBI:15378"/>
        <dbReference type="ChEBI" id="CHEBI:57856"/>
        <dbReference type="ChEBI" id="CHEBI:59789"/>
        <dbReference type="ChEBI" id="CHEBI:74411"/>
        <dbReference type="ChEBI" id="CHEBI:74493"/>
        <dbReference type="EC" id="2.1.1.182"/>
    </reaction>
</comment>
<comment type="subcellular location">
    <subcellularLocation>
        <location evidence="1">Cytoplasm</location>
    </subcellularLocation>
</comment>
<comment type="similarity">
    <text evidence="1">Belongs to the class I-like SAM-binding methyltransferase superfamily. rRNA adenine N(6)-methyltransferase family. RsmA subfamily.</text>
</comment>
<protein>
    <recommendedName>
        <fullName evidence="1">Ribosomal RNA small subunit methyltransferase A</fullName>
        <ecNumber evidence="1">2.1.1.182</ecNumber>
    </recommendedName>
    <alternativeName>
        <fullName evidence="1">16S rRNA (adenine(1518)-N(6)/adenine(1519)-N(6))-dimethyltransferase</fullName>
    </alternativeName>
    <alternativeName>
        <fullName evidence="1">16S rRNA dimethyladenosine transferase</fullName>
    </alternativeName>
    <alternativeName>
        <fullName evidence="1">16S rRNA dimethylase</fullName>
    </alternativeName>
    <alternativeName>
        <fullName evidence="1">S-adenosylmethionine-6-N', N'-adenosyl(rRNA) dimethyltransferase</fullName>
    </alternativeName>
</protein>
<gene>
    <name evidence="1" type="primary">rsmA</name>
    <name evidence="1" type="synonym">ksgA</name>
    <name type="ordered locus">Spea_0862</name>
</gene>
<proteinExistence type="inferred from homology"/>
<organism>
    <name type="scientific">Shewanella pealeana (strain ATCC 700345 / ANG-SQ1)</name>
    <dbReference type="NCBI Taxonomy" id="398579"/>
    <lineage>
        <taxon>Bacteria</taxon>
        <taxon>Pseudomonadati</taxon>
        <taxon>Pseudomonadota</taxon>
        <taxon>Gammaproteobacteria</taxon>
        <taxon>Alteromonadales</taxon>
        <taxon>Shewanellaceae</taxon>
        <taxon>Shewanella</taxon>
    </lineage>
</organism>
<dbReference type="EC" id="2.1.1.182" evidence="1"/>
<dbReference type="EMBL" id="CP000851">
    <property type="protein sequence ID" value="ABV86189.1"/>
    <property type="molecule type" value="Genomic_DNA"/>
</dbReference>
<dbReference type="RefSeq" id="WP_012154123.1">
    <property type="nucleotide sequence ID" value="NC_009901.1"/>
</dbReference>
<dbReference type="SMR" id="A8H0V2"/>
<dbReference type="STRING" id="398579.Spea_0862"/>
<dbReference type="KEGG" id="spl:Spea_0862"/>
<dbReference type="eggNOG" id="COG0030">
    <property type="taxonomic scope" value="Bacteria"/>
</dbReference>
<dbReference type="HOGENOM" id="CLU_041220_0_1_6"/>
<dbReference type="OrthoDB" id="9814755at2"/>
<dbReference type="Proteomes" id="UP000002608">
    <property type="component" value="Chromosome"/>
</dbReference>
<dbReference type="GO" id="GO:0005829">
    <property type="term" value="C:cytosol"/>
    <property type="evidence" value="ECO:0007669"/>
    <property type="project" value="TreeGrafter"/>
</dbReference>
<dbReference type="GO" id="GO:0052908">
    <property type="term" value="F:16S rRNA (adenine(1518)-N(6)/adenine(1519)-N(6))-dimethyltransferase activity"/>
    <property type="evidence" value="ECO:0007669"/>
    <property type="project" value="UniProtKB-EC"/>
</dbReference>
<dbReference type="GO" id="GO:0003723">
    <property type="term" value="F:RNA binding"/>
    <property type="evidence" value="ECO:0007669"/>
    <property type="project" value="UniProtKB-KW"/>
</dbReference>
<dbReference type="FunFam" id="1.10.8.100:FF:000001">
    <property type="entry name" value="Ribosomal RNA small subunit methyltransferase A"/>
    <property type="match status" value="1"/>
</dbReference>
<dbReference type="FunFam" id="3.40.50.150:FF:000006">
    <property type="entry name" value="Ribosomal RNA small subunit methyltransferase A"/>
    <property type="match status" value="1"/>
</dbReference>
<dbReference type="Gene3D" id="1.10.8.100">
    <property type="entry name" value="Ribosomal RNA adenine dimethylase-like, domain 2"/>
    <property type="match status" value="1"/>
</dbReference>
<dbReference type="Gene3D" id="3.40.50.150">
    <property type="entry name" value="Vaccinia Virus protein VP39"/>
    <property type="match status" value="1"/>
</dbReference>
<dbReference type="HAMAP" id="MF_00607">
    <property type="entry name" value="16SrRNA_methyltr_A"/>
    <property type="match status" value="1"/>
</dbReference>
<dbReference type="InterPro" id="IPR001737">
    <property type="entry name" value="KsgA/Erm"/>
</dbReference>
<dbReference type="InterPro" id="IPR023165">
    <property type="entry name" value="rRNA_Ade_diMease-like_C"/>
</dbReference>
<dbReference type="InterPro" id="IPR020596">
    <property type="entry name" value="rRNA_Ade_Mease_Trfase_CS"/>
</dbReference>
<dbReference type="InterPro" id="IPR020598">
    <property type="entry name" value="rRNA_Ade_methylase_Trfase_N"/>
</dbReference>
<dbReference type="InterPro" id="IPR011530">
    <property type="entry name" value="rRNA_adenine_dimethylase"/>
</dbReference>
<dbReference type="InterPro" id="IPR029063">
    <property type="entry name" value="SAM-dependent_MTases_sf"/>
</dbReference>
<dbReference type="NCBIfam" id="TIGR00755">
    <property type="entry name" value="ksgA"/>
    <property type="match status" value="1"/>
</dbReference>
<dbReference type="PANTHER" id="PTHR11727">
    <property type="entry name" value="DIMETHYLADENOSINE TRANSFERASE"/>
    <property type="match status" value="1"/>
</dbReference>
<dbReference type="PANTHER" id="PTHR11727:SF7">
    <property type="entry name" value="DIMETHYLADENOSINE TRANSFERASE-RELATED"/>
    <property type="match status" value="1"/>
</dbReference>
<dbReference type="Pfam" id="PF00398">
    <property type="entry name" value="RrnaAD"/>
    <property type="match status" value="1"/>
</dbReference>
<dbReference type="SMART" id="SM00650">
    <property type="entry name" value="rADc"/>
    <property type="match status" value="1"/>
</dbReference>
<dbReference type="SUPFAM" id="SSF53335">
    <property type="entry name" value="S-adenosyl-L-methionine-dependent methyltransferases"/>
    <property type="match status" value="1"/>
</dbReference>
<dbReference type="PROSITE" id="PS01131">
    <property type="entry name" value="RRNA_A_DIMETH"/>
    <property type="match status" value="1"/>
</dbReference>
<dbReference type="PROSITE" id="PS51689">
    <property type="entry name" value="SAM_RNA_A_N6_MT"/>
    <property type="match status" value="1"/>
</dbReference>
<sequence length="267" mass="30333">MSNKVHLGHTARKRFGQNFLTDENVINRIVGAISPDNDHVMVEIGPGLAALTEPVASGIDKLIVVELDKDLVERLKEHPVLKDKLEIHQGDALKFDFNQLVREDKQMKVFGNLPYNISTPLMFHLFEFAQHIENMHFMLQKEVVLRLSASPGTKAYGRLTVMAQYHCQVMPVLEVPPGCFTPPPKVDSAVVRLVPYKVKPWPCKDVDLLRNLTTTAFNMRRKTLRNNLKQLLSDEDFAVLGIDATLRPEQISVEQYVAMANHVFDRK</sequence>
<name>RSMA_SHEPA</name>
<accession>A8H0V2</accession>
<reference key="1">
    <citation type="submission" date="2007-10" db="EMBL/GenBank/DDBJ databases">
        <title>Complete sequence of Shewanella pealeana ATCC 700345.</title>
        <authorList>
            <consortium name="US DOE Joint Genome Institute"/>
            <person name="Copeland A."/>
            <person name="Lucas S."/>
            <person name="Lapidus A."/>
            <person name="Barry K."/>
            <person name="Glavina del Rio T."/>
            <person name="Dalin E."/>
            <person name="Tice H."/>
            <person name="Pitluck S."/>
            <person name="Chertkov O."/>
            <person name="Brettin T."/>
            <person name="Bruce D."/>
            <person name="Detter J.C."/>
            <person name="Han C."/>
            <person name="Schmutz J."/>
            <person name="Larimer F."/>
            <person name="Land M."/>
            <person name="Hauser L."/>
            <person name="Kyrpides N."/>
            <person name="Kim E."/>
            <person name="Zhao J.-S.Z."/>
            <person name="Manno D."/>
            <person name="Hawari J."/>
            <person name="Richardson P."/>
        </authorList>
    </citation>
    <scope>NUCLEOTIDE SEQUENCE [LARGE SCALE GENOMIC DNA]</scope>
    <source>
        <strain>ATCC 700345 / ANG-SQ1</strain>
    </source>
</reference>
<keyword id="KW-0963">Cytoplasm</keyword>
<keyword id="KW-0489">Methyltransferase</keyword>
<keyword id="KW-1185">Reference proteome</keyword>
<keyword id="KW-0694">RNA-binding</keyword>
<keyword id="KW-0698">rRNA processing</keyword>
<keyword id="KW-0949">S-adenosyl-L-methionine</keyword>
<keyword id="KW-0808">Transferase</keyword>
<feature type="chain" id="PRO_1000082562" description="Ribosomal RNA small subunit methyltransferase A">
    <location>
        <begin position="1"/>
        <end position="267"/>
    </location>
</feature>
<feature type="binding site" evidence="1">
    <location>
        <position position="18"/>
    </location>
    <ligand>
        <name>S-adenosyl-L-methionine</name>
        <dbReference type="ChEBI" id="CHEBI:59789"/>
    </ligand>
</feature>
<feature type="binding site" evidence="1">
    <location>
        <position position="20"/>
    </location>
    <ligand>
        <name>S-adenosyl-L-methionine</name>
        <dbReference type="ChEBI" id="CHEBI:59789"/>
    </ligand>
</feature>
<feature type="binding site" evidence="1">
    <location>
        <position position="45"/>
    </location>
    <ligand>
        <name>S-adenosyl-L-methionine</name>
        <dbReference type="ChEBI" id="CHEBI:59789"/>
    </ligand>
</feature>
<feature type="binding site" evidence="1">
    <location>
        <position position="66"/>
    </location>
    <ligand>
        <name>S-adenosyl-L-methionine</name>
        <dbReference type="ChEBI" id="CHEBI:59789"/>
    </ligand>
</feature>
<feature type="binding site" evidence="1">
    <location>
        <position position="91"/>
    </location>
    <ligand>
        <name>S-adenosyl-L-methionine</name>
        <dbReference type="ChEBI" id="CHEBI:59789"/>
    </ligand>
</feature>
<feature type="binding site" evidence="1">
    <location>
        <position position="112"/>
    </location>
    <ligand>
        <name>S-adenosyl-L-methionine</name>
        <dbReference type="ChEBI" id="CHEBI:59789"/>
    </ligand>
</feature>
<evidence type="ECO:0000255" key="1">
    <source>
        <dbReference type="HAMAP-Rule" id="MF_00607"/>
    </source>
</evidence>